<name>GREA_HALH5</name>
<proteinExistence type="inferred from homology"/>
<keyword id="KW-0175">Coiled coil</keyword>
<keyword id="KW-0238">DNA-binding</keyword>
<keyword id="KW-1185">Reference proteome</keyword>
<keyword id="KW-0804">Transcription</keyword>
<keyword id="KW-0805">Transcription regulation</keyword>
<reference key="1">
    <citation type="journal article" date="2000" name="Nucleic Acids Res.">
        <title>Complete genome sequence of the alkaliphilic bacterium Bacillus halodurans and genomic sequence comparison with Bacillus subtilis.</title>
        <authorList>
            <person name="Takami H."/>
            <person name="Nakasone K."/>
            <person name="Takaki Y."/>
            <person name="Maeno G."/>
            <person name="Sasaki R."/>
            <person name="Masui N."/>
            <person name="Fuji F."/>
            <person name="Hirama C."/>
            <person name="Nakamura Y."/>
            <person name="Ogasawara N."/>
            <person name="Kuhara S."/>
            <person name="Horikoshi K."/>
        </authorList>
    </citation>
    <scope>NUCLEOTIDE SEQUENCE [LARGE SCALE GENOMIC DNA]</scope>
    <source>
        <strain>ATCC BAA-125 / DSM 18197 / FERM 7344 / JCM 9153 / C-125</strain>
    </source>
</reference>
<accession>Q9KDD7</accession>
<gene>
    <name evidence="1" type="primary">greA</name>
    <name type="ordered locus">BH1276</name>
</gene>
<comment type="function">
    <text evidence="1">Necessary for efficient RNA polymerase transcription elongation past template-encoded arresting sites. The arresting sites in DNA have the property of trapping a certain fraction of elongating RNA polymerases that pass through, resulting in locked ternary complexes. Cleavage of the nascent transcript by cleavage factors such as GreA or GreB allows the resumption of elongation from the new 3'terminus. GreA releases sequences of 2 to 3 nucleotides.</text>
</comment>
<comment type="similarity">
    <text evidence="1">Belongs to the GreA/GreB family.</text>
</comment>
<organism>
    <name type="scientific">Halalkalibacterium halodurans (strain ATCC BAA-125 / DSM 18197 / FERM 7344 / JCM 9153 / C-125)</name>
    <name type="common">Bacillus halodurans</name>
    <dbReference type="NCBI Taxonomy" id="272558"/>
    <lineage>
        <taxon>Bacteria</taxon>
        <taxon>Bacillati</taxon>
        <taxon>Bacillota</taxon>
        <taxon>Bacilli</taxon>
        <taxon>Bacillales</taxon>
        <taxon>Bacillaceae</taxon>
        <taxon>Halalkalibacterium (ex Joshi et al. 2022)</taxon>
    </lineage>
</organism>
<feature type="chain" id="PRO_0000176908" description="Transcription elongation factor GreA">
    <location>
        <begin position="1"/>
        <end position="158"/>
    </location>
</feature>
<feature type="coiled-coil region" evidence="1">
    <location>
        <begin position="10"/>
        <end position="76"/>
    </location>
</feature>
<evidence type="ECO:0000255" key="1">
    <source>
        <dbReference type="HAMAP-Rule" id="MF_00105"/>
    </source>
</evidence>
<protein>
    <recommendedName>
        <fullName evidence="1">Transcription elongation factor GreA</fullName>
    </recommendedName>
    <alternativeName>
        <fullName evidence="1">Transcript cleavage factor GreA</fullName>
    </alternativeName>
</protein>
<sequence length="158" mass="17855">MAEEKKHYMTLEGKKKLEEELEYLKTERRKEVVERIKIARSFGDLSENSEYDSAKEEQAFVEGRISQIEKMIRNAEIIEESEGDANVVSLGKTVKFVEIPDGEEEEYTIVGSAESDPFEGKISNDSPMAQSLLGHTIDDVVIVNTPGGEMEVKILEIR</sequence>
<dbReference type="EMBL" id="BA000004">
    <property type="protein sequence ID" value="BAB04995.1"/>
    <property type="molecule type" value="Genomic_DNA"/>
</dbReference>
<dbReference type="PIR" id="D83809">
    <property type="entry name" value="D83809"/>
</dbReference>
<dbReference type="RefSeq" id="WP_010897444.1">
    <property type="nucleotide sequence ID" value="NC_002570.2"/>
</dbReference>
<dbReference type="SMR" id="Q9KDD7"/>
<dbReference type="STRING" id="272558.gene:10727170"/>
<dbReference type="GeneID" id="87596899"/>
<dbReference type="KEGG" id="bha:BH1276"/>
<dbReference type="eggNOG" id="COG0782">
    <property type="taxonomic scope" value="Bacteria"/>
</dbReference>
<dbReference type="HOGENOM" id="CLU_101379_2_1_9"/>
<dbReference type="OrthoDB" id="9808774at2"/>
<dbReference type="Proteomes" id="UP000001258">
    <property type="component" value="Chromosome"/>
</dbReference>
<dbReference type="GO" id="GO:0003677">
    <property type="term" value="F:DNA binding"/>
    <property type="evidence" value="ECO:0007669"/>
    <property type="project" value="UniProtKB-UniRule"/>
</dbReference>
<dbReference type="GO" id="GO:0070063">
    <property type="term" value="F:RNA polymerase binding"/>
    <property type="evidence" value="ECO:0007669"/>
    <property type="project" value="InterPro"/>
</dbReference>
<dbReference type="GO" id="GO:0006354">
    <property type="term" value="P:DNA-templated transcription elongation"/>
    <property type="evidence" value="ECO:0007669"/>
    <property type="project" value="TreeGrafter"/>
</dbReference>
<dbReference type="GO" id="GO:0032784">
    <property type="term" value="P:regulation of DNA-templated transcription elongation"/>
    <property type="evidence" value="ECO:0007669"/>
    <property type="project" value="UniProtKB-UniRule"/>
</dbReference>
<dbReference type="FunFam" id="1.10.287.180:FF:000001">
    <property type="entry name" value="Transcription elongation factor GreA"/>
    <property type="match status" value="1"/>
</dbReference>
<dbReference type="FunFam" id="3.10.50.30:FF:000001">
    <property type="entry name" value="Transcription elongation factor GreA"/>
    <property type="match status" value="1"/>
</dbReference>
<dbReference type="Gene3D" id="3.10.50.30">
    <property type="entry name" value="Transcription elongation factor, GreA/GreB, C-terminal domain"/>
    <property type="match status" value="1"/>
</dbReference>
<dbReference type="Gene3D" id="1.10.287.180">
    <property type="entry name" value="Transcription elongation factor, GreA/GreB, N-terminal domain"/>
    <property type="match status" value="1"/>
</dbReference>
<dbReference type="HAMAP" id="MF_00105">
    <property type="entry name" value="GreA_GreB"/>
    <property type="match status" value="1"/>
</dbReference>
<dbReference type="InterPro" id="IPR036953">
    <property type="entry name" value="GreA/GreB_C_sf"/>
</dbReference>
<dbReference type="InterPro" id="IPR018151">
    <property type="entry name" value="TF_GreA/GreB_CS"/>
</dbReference>
<dbReference type="InterPro" id="IPR006359">
    <property type="entry name" value="Tscrpt_elong_fac_GreA"/>
</dbReference>
<dbReference type="InterPro" id="IPR028624">
    <property type="entry name" value="Tscrpt_elong_fac_GreA/B"/>
</dbReference>
<dbReference type="InterPro" id="IPR001437">
    <property type="entry name" value="Tscrpt_elong_fac_GreA/B_C"/>
</dbReference>
<dbReference type="InterPro" id="IPR023459">
    <property type="entry name" value="Tscrpt_elong_fac_GreA/B_fam"/>
</dbReference>
<dbReference type="InterPro" id="IPR022691">
    <property type="entry name" value="Tscrpt_elong_fac_GreA/B_N"/>
</dbReference>
<dbReference type="InterPro" id="IPR036805">
    <property type="entry name" value="Tscrpt_elong_fac_GreA/B_N_sf"/>
</dbReference>
<dbReference type="NCBIfam" id="TIGR01462">
    <property type="entry name" value="greA"/>
    <property type="match status" value="1"/>
</dbReference>
<dbReference type="NCBIfam" id="NF001263">
    <property type="entry name" value="PRK00226.1-4"/>
    <property type="match status" value="1"/>
</dbReference>
<dbReference type="PANTHER" id="PTHR30437">
    <property type="entry name" value="TRANSCRIPTION ELONGATION FACTOR GREA"/>
    <property type="match status" value="1"/>
</dbReference>
<dbReference type="PANTHER" id="PTHR30437:SF4">
    <property type="entry name" value="TRANSCRIPTION ELONGATION FACTOR GREA"/>
    <property type="match status" value="1"/>
</dbReference>
<dbReference type="Pfam" id="PF01272">
    <property type="entry name" value="GreA_GreB"/>
    <property type="match status" value="1"/>
</dbReference>
<dbReference type="Pfam" id="PF03449">
    <property type="entry name" value="GreA_GreB_N"/>
    <property type="match status" value="1"/>
</dbReference>
<dbReference type="PIRSF" id="PIRSF006092">
    <property type="entry name" value="GreA_GreB"/>
    <property type="match status" value="1"/>
</dbReference>
<dbReference type="SUPFAM" id="SSF54534">
    <property type="entry name" value="FKBP-like"/>
    <property type="match status" value="1"/>
</dbReference>
<dbReference type="SUPFAM" id="SSF46557">
    <property type="entry name" value="GreA transcript cleavage protein, N-terminal domain"/>
    <property type="match status" value="1"/>
</dbReference>
<dbReference type="PROSITE" id="PS00829">
    <property type="entry name" value="GREAB_1"/>
    <property type="match status" value="1"/>
</dbReference>
<dbReference type="PROSITE" id="PS00830">
    <property type="entry name" value="GREAB_2"/>
    <property type="match status" value="1"/>
</dbReference>